<organism>
    <name type="scientific">Synechococcus elongatus (strain ATCC 33912 / PCC 7942 / FACHB-805)</name>
    <name type="common">Anacystis nidulans R2</name>
    <dbReference type="NCBI Taxonomy" id="1140"/>
    <lineage>
        <taxon>Bacteria</taxon>
        <taxon>Bacillati</taxon>
        <taxon>Cyanobacteriota</taxon>
        <taxon>Cyanophyceae</taxon>
        <taxon>Synechococcales</taxon>
        <taxon>Synechococcaceae</taxon>
        <taxon>Synechococcus</taxon>
    </lineage>
</organism>
<keyword id="KW-0028">Amino-acid biosynthesis</keyword>
<keyword id="KW-0963">Cytoplasm</keyword>
<keyword id="KW-0368">Histidine biosynthesis</keyword>
<keyword id="KW-1185">Reference proteome</keyword>
<proteinExistence type="inferred from homology"/>
<comment type="function">
    <text evidence="1">Required for the first step of histidine biosynthesis. May allow the feedback regulation of ATP phosphoribosyltransferase activity by histidine (By similarity).</text>
</comment>
<comment type="pathway">
    <text>Amino-acid biosynthesis; L-histidine biosynthesis; L-histidine from 5-phospho-alpha-D-ribose 1-diphosphate: step 1/9.</text>
</comment>
<comment type="subunit">
    <text evidence="1">Heteromultimer composed of HisG and HisZ subunits.</text>
</comment>
<comment type="subcellular location">
    <subcellularLocation>
        <location evidence="1">Cytoplasm</location>
    </subcellularLocation>
</comment>
<comment type="miscellaneous">
    <text>This function is generally fulfilled by the C-terminal part of HisG, which is missing in some bacteria such as this one.</text>
</comment>
<comment type="similarity">
    <text evidence="2">Belongs to the class-II aminoacyl-tRNA synthetase family. HisZ subfamily.</text>
</comment>
<name>HISZ_SYNE7</name>
<feature type="chain" id="PRO_0000171069" description="ATP phosphoribosyltransferase regulatory subunit">
    <location>
        <begin position="1"/>
        <end position="420"/>
    </location>
</feature>
<feature type="sequence conflict" description="In Ref. 1; AAA64445." evidence="2" ref="1">
    <original>L</original>
    <variation>F</variation>
    <location>
        <position position="192"/>
    </location>
</feature>
<dbReference type="EMBL" id="L35476">
    <property type="protein sequence ID" value="AAA64445.1"/>
    <property type="molecule type" value="Genomic_DNA"/>
</dbReference>
<dbReference type="EMBL" id="CP000100">
    <property type="protein sequence ID" value="ABB56845.1"/>
    <property type="molecule type" value="Genomic_DNA"/>
</dbReference>
<dbReference type="RefSeq" id="WP_011243038.1">
    <property type="nucleotide sequence ID" value="NZ_JACJTX010000005.1"/>
</dbReference>
<dbReference type="SMR" id="Q55267"/>
<dbReference type="STRING" id="1140.Synpcc7942_0813"/>
<dbReference type="PaxDb" id="1140-Synpcc7942_0813"/>
<dbReference type="KEGG" id="syf:Synpcc7942_0813"/>
<dbReference type="eggNOG" id="COG3705">
    <property type="taxonomic scope" value="Bacteria"/>
</dbReference>
<dbReference type="HOGENOM" id="CLU_025113_0_2_3"/>
<dbReference type="OrthoDB" id="9800814at2"/>
<dbReference type="BioCyc" id="SYNEL:SYNPCC7942_0813-MONOMER"/>
<dbReference type="BRENDA" id="6.1.1.21">
    <property type="organism ID" value="6187"/>
</dbReference>
<dbReference type="UniPathway" id="UPA00031">
    <property type="reaction ID" value="UER00006"/>
</dbReference>
<dbReference type="Proteomes" id="UP000889800">
    <property type="component" value="Chromosome"/>
</dbReference>
<dbReference type="GO" id="GO:0005737">
    <property type="term" value="C:cytoplasm"/>
    <property type="evidence" value="ECO:0007669"/>
    <property type="project" value="UniProtKB-SubCell"/>
</dbReference>
<dbReference type="GO" id="GO:0004821">
    <property type="term" value="F:histidine-tRNA ligase activity"/>
    <property type="evidence" value="ECO:0007669"/>
    <property type="project" value="TreeGrafter"/>
</dbReference>
<dbReference type="GO" id="GO:0006427">
    <property type="term" value="P:histidyl-tRNA aminoacylation"/>
    <property type="evidence" value="ECO:0007669"/>
    <property type="project" value="TreeGrafter"/>
</dbReference>
<dbReference type="GO" id="GO:0000105">
    <property type="term" value="P:L-histidine biosynthetic process"/>
    <property type="evidence" value="ECO:0007669"/>
    <property type="project" value="UniProtKB-UniRule"/>
</dbReference>
<dbReference type="CDD" id="cd00773">
    <property type="entry name" value="HisRS-like_core"/>
    <property type="match status" value="1"/>
</dbReference>
<dbReference type="Gene3D" id="3.30.930.10">
    <property type="entry name" value="Bira Bifunctional Protein, Domain 2"/>
    <property type="match status" value="1"/>
</dbReference>
<dbReference type="HAMAP" id="MF_00125">
    <property type="entry name" value="HisZ"/>
    <property type="match status" value="1"/>
</dbReference>
<dbReference type="InterPro" id="IPR006195">
    <property type="entry name" value="aa-tRNA-synth_II"/>
</dbReference>
<dbReference type="InterPro" id="IPR045864">
    <property type="entry name" value="aa-tRNA-synth_II/BPL/LPL"/>
</dbReference>
<dbReference type="InterPro" id="IPR041715">
    <property type="entry name" value="HisRS-like_core"/>
</dbReference>
<dbReference type="InterPro" id="IPR004516">
    <property type="entry name" value="HisRS/HisZ"/>
</dbReference>
<dbReference type="InterPro" id="IPR004517">
    <property type="entry name" value="HisZ"/>
</dbReference>
<dbReference type="NCBIfam" id="TIGR00443">
    <property type="entry name" value="hisZ_biosyn_reg"/>
    <property type="match status" value="1"/>
</dbReference>
<dbReference type="NCBIfam" id="NF008940">
    <property type="entry name" value="PRK12292.2-3"/>
    <property type="match status" value="1"/>
</dbReference>
<dbReference type="PANTHER" id="PTHR43707:SF1">
    <property type="entry name" value="HISTIDINE--TRNA LIGASE, MITOCHONDRIAL-RELATED"/>
    <property type="match status" value="1"/>
</dbReference>
<dbReference type="PANTHER" id="PTHR43707">
    <property type="entry name" value="HISTIDYL-TRNA SYNTHETASE"/>
    <property type="match status" value="1"/>
</dbReference>
<dbReference type="Pfam" id="PF13393">
    <property type="entry name" value="tRNA-synt_His"/>
    <property type="match status" value="1"/>
</dbReference>
<dbReference type="PIRSF" id="PIRSF001549">
    <property type="entry name" value="His-tRNA_synth"/>
    <property type="match status" value="1"/>
</dbReference>
<dbReference type="SUPFAM" id="SSF55681">
    <property type="entry name" value="Class II aaRS and biotin synthetases"/>
    <property type="match status" value="1"/>
</dbReference>
<dbReference type="PROSITE" id="PS50862">
    <property type="entry name" value="AA_TRNA_LIGASE_II"/>
    <property type="match status" value="1"/>
</dbReference>
<evidence type="ECO:0000250" key="1"/>
<evidence type="ECO:0000305" key="2"/>
<accession>Q55267</accession>
<accession>Q31Q24</accession>
<protein>
    <recommendedName>
        <fullName>ATP phosphoribosyltransferase regulatory subunit</fullName>
    </recommendedName>
</protein>
<gene>
    <name type="primary">hisZ</name>
    <name type="ordered locus">Synpcc7942_0813</name>
</gene>
<reference key="1">
    <citation type="journal article" date="1994" name="J. Bacteriol.">
        <title>Efficient gene transfer in Synechococcus sp. strains PCC 7942 and PCC 6301 by interspecies conjugation and chromosomal recombination.</title>
        <authorList>
            <person name="Tsinoremas N.F."/>
            <person name="Kutach A.K."/>
            <person name="Strayer C.A."/>
            <person name="Golden S.S."/>
        </authorList>
    </citation>
    <scope>NUCLEOTIDE SEQUENCE [GENOMIC DNA]</scope>
</reference>
<reference key="2">
    <citation type="submission" date="2005-08" db="EMBL/GenBank/DDBJ databases">
        <title>Complete sequence of chromosome 1 of Synechococcus elongatus PCC 7942.</title>
        <authorList>
            <consortium name="US DOE Joint Genome Institute"/>
            <person name="Copeland A."/>
            <person name="Lucas S."/>
            <person name="Lapidus A."/>
            <person name="Barry K."/>
            <person name="Detter J.C."/>
            <person name="Glavina T."/>
            <person name="Hammon N."/>
            <person name="Israni S."/>
            <person name="Pitluck S."/>
            <person name="Schmutz J."/>
            <person name="Larimer F."/>
            <person name="Land M."/>
            <person name="Kyrpides N."/>
            <person name="Lykidis A."/>
            <person name="Golden S."/>
            <person name="Richardson P."/>
        </authorList>
    </citation>
    <scope>NUCLEOTIDE SEQUENCE [LARGE SCALE GENOMIC DNA]</scope>
    <source>
        <strain>ATCC 33912 / PCC 7942 / FACHB-805</strain>
    </source>
</reference>
<sequence>MVHQPPAGTRDLLPQDVTQKRWIESRLQQVFQQWGYQRIITPTLERLDTLVAGGAVQRSAVIQVQSDEESGLGLRPELTASIARAAVTRLAGSSLPLRLYYLANVFRPAFQGDRLQQRELFQAGVELLGVGGTLADAEVLHVLADALAELGFGQPPLGSWHLVVGEASLTRSLLQPFPKDLREKVRQAIAQLDRVTLESLPLESQLRDRALLLHDLRGQPDQVFAKLQQLTLTPLEQTLRDRLAQLVELYNASAGPQDSPLLLDLSLLRSFDYYTGIVFEVVYETPTGPWVLAQGGRYDRLLDVYDPQAAGQPGIGFSCNIENLQQVLLAANRLPHRPPAIDQLVIPVDSEAYGAALAEAQRLQRQDQLRVELYLDSDRRPEVVQAFAQRRRIGRIVWVSSGSAPQSEAVAVAERATTTC</sequence>